<dbReference type="EMBL" id="D88792">
    <property type="protein sequence ID" value="BAA13722.1"/>
    <property type="molecule type" value="mRNA"/>
</dbReference>
<dbReference type="EMBL" id="AK010626">
    <property type="protein sequence ID" value="BAB27072.1"/>
    <property type="molecule type" value="mRNA"/>
</dbReference>
<dbReference type="EMBL" id="AK012647">
    <property type="protein sequence ID" value="BAB28379.1"/>
    <property type="molecule type" value="mRNA"/>
</dbReference>
<dbReference type="EMBL" id="BC012663">
    <property type="protein sequence ID" value="AAH12663.1"/>
    <property type="molecule type" value="mRNA"/>
</dbReference>
<dbReference type="CCDS" id="CCDS24165.1"/>
<dbReference type="RefSeq" id="NP_031818.3">
    <property type="nucleotide sequence ID" value="NM_007792.4"/>
</dbReference>
<dbReference type="SMR" id="P97314"/>
<dbReference type="BioGRID" id="198953">
    <property type="interactions" value="2"/>
</dbReference>
<dbReference type="FunCoup" id="P97314">
    <property type="interactions" value="471"/>
</dbReference>
<dbReference type="STRING" id="10090.ENSMUSP00000020403"/>
<dbReference type="GlyGen" id="P97314">
    <property type="glycosylation" value="1 site, 1 O-linked glycan (1 site)"/>
</dbReference>
<dbReference type="iPTMnet" id="P97314"/>
<dbReference type="PhosphoSitePlus" id="P97314"/>
<dbReference type="SwissPalm" id="P97314"/>
<dbReference type="jPOST" id="P97314"/>
<dbReference type="PaxDb" id="10090-ENSMUSP00000020403"/>
<dbReference type="PeptideAtlas" id="P97314"/>
<dbReference type="ProteomicsDB" id="284053"/>
<dbReference type="Pumba" id="P97314"/>
<dbReference type="Antibodypedia" id="29699">
    <property type="antibodies" value="242 antibodies from 33 providers"/>
</dbReference>
<dbReference type="DNASU" id="13008"/>
<dbReference type="Ensembl" id="ENSMUST00000020403.7">
    <property type="protein sequence ID" value="ENSMUSP00000020403.6"/>
    <property type="gene ID" value="ENSMUSG00000020186.8"/>
</dbReference>
<dbReference type="GeneID" id="13008"/>
<dbReference type="KEGG" id="mmu:13008"/>
<dbReference type="UCSC" id="uc007gzs.2">
    <property type="organism name" value="mouse"/>
</dbReference>
<dbReference type="AGR" id="MGI:1202907"/>
<dbReference type="CTD" id="1466"/>
<dbReference type="MGI" id="MGI:1202907">
    <property type="gene designation" value="Csrp2"/>
</dbReference>
<dbReference type="VEuPathDB" id="HostDB:ENSMUSG00000020186"/>
<dbReference type="eggNOG" id="KOG1700">
    <property type="taxonomic scope" value="Eukaryota"/>
</dbReference>
<dbReference type="GeneTree" id="ENSGT00940000154980"/>
<dbReference type="HOGENOM" id="CLU_054591_1_0_1"/>
<dbReference type="InParanoid" id="P97314"/>
<dbReference type="OMA" id="CKTDYDR"/>
<dbReference type="OrthoDB" id="1679758at2759"/>
<dbReference type="PhylomeDB" id="P97314"/>
<dbReference type="TreeFam" id="TF313758"/>
<dbReference type="BioGRID-ORCS" id="13008">
    <property type="hits" value="1 hit in 77 CRISPR screens"/>
</dbReference>
<dbReference type="ChiTaRS" id="Csrp2">
    <property type="organism name" value="mouse"/>
</dbReference>
<dbReference type="PRO" id="PR:P97314"/>
<dbReference type="Proteomes" id="UP000000589">
    <property type="component" value="Chromosome 10"/>
</dbReference>
<dbReference type="RNAct" id="P97314">
    <property type="molecule type" value="protein"/>
</dbReference>
<dbReference type="Bgee" id="ENSMUSG00000020186">
    <property type="expression patterns" value="Expressed in ascending aorta and 247 other cell types or tissues"/>
</dbReference>
<dbReference type="ExpressionAtlas" id="P97314">
    <property type="expression patterns" value="baseline and differential"/>
</dbReference>
<dbReference type="GO" id="GO:0005634">
    <property type="term" value="C:nucleus"/>
    <property type="evidence" value="ECO:0007669"/>
    <property type="project" value="UniProtKB-SubCell"/>
</dbReference>
<dbReference type="GO" id="GO:0046872">
    <property type="term" value="F:metal ion binding"/>
    <property type="evidence" value="ECO:0007669"/>
    <property type="project" value="UniProtKB-KW"/>
</dbReference>
<dbReference type="GO" id="GO:0030154">
    <property type="term" value="P:cell differentiation"/>
    <property type="evidence" value="ECO:0007669"/>
    <property type="project" value="UniProtKB-KW"/>
</dbReference>
<dbReference type="CDD" id="cd09480">
    <property type="entry name" value="LIM1_CRP2"/>
    <property type="match status" value="1"/>
</dbReference>
<dbReference type="CDD" id="cd09840">
    <property type="entry name" value="LIM2_CRP2"/>
    <property type="match status" value="1"/>
</dbReference>
<dbReference type="FunFam" id="2.10.110.10:FF:000001">
    <property type="entry name" value="Cysteine and glycine-rich protein 1"/>
    <property type="match status" value="2"/>
</dbReference>
<dbReference type="Gene3D" id="2.10.110.10">
    <property type="entry name" value="Cysteine Rich Protein"/>
    <property type="match status" value="2"/>
</dbReference>
<dbReference type="InterPro" id="IPR001781">
    <property type="entry name" value="Znf_LIM"/>
</dbReference>
<dbReference type="PANTHER" id="PTHR24215:SF3">
    <property type="entry name" value="CYSTEINE AND GLYCINE-RICH PROTEIN 2"/>
    <property type="match status" value="1"/>
</dbReference>
<dbReference type="PANTHER" id="PTHR24215">
    <property type="entry name" value="RHO-GTPASE-ACTIVATING PROTEIN LRG1"/>
    <property type="match status" value="1"/>
</dbReference>
<dbReference type="Pfam" id="PF00412">
    <property type="entry name" value="LIM"/>
    <property type="match status" value="2"/>
</dbReference>
<dbReference type="SMART" id="SM00132">
    <property type="entry name" value="LIM"/>
    <property type="match status" value="2"/>
</dbReference>
<dbReference type="SUPFAM" id="SSF57716">
    <property type="entry name" value="Glucocorticoid receptor-like (DNA-binding domain)"/>
    <property type="match status" value="4"/>
</dbReference>
<dbReference type="PROSITE" id="PS00478">
    <property type="entry name" value="LIM_DOMAIN_1"/>
    <property type="match status" value="2"/>
</dbReference>
<dbReference type="PROSITE" id="PS50023">
    <property type="entry name" value="LIM_DOMAIN_2"/>
    <property type="match status" value="2"/>
</dbReference>
<keyword id="KW-0007">Acetylation</keyword>
<keyword id="KW-0217">Developmental protein</keyword>
<keyword id="KW-0221">Differentiation</keyword>
<keyword id="KW-1017">Isopeptide bond</keyword>
<keyword id="KW-0440">LIM domain</keyword>
<keyword id="KW-0479">Metal-binding</keyword>
<keyword id="KW-0539">Nucleus</keyword>
<keyword id="KW-1185">Reference proteome</keyword>
<keyword id="KW-0677">Repeat</keyword>
<keyword id="KW-0832">Ubl conjugation</keyword>
<keyword id="KW-0862">Zinc</keyword>
<name>CSRP2_MOUSE</name>
<reference key="1">
    <citation type="submission" date="1996-11" db="EMBL/GenBank/DDBJ databases">
        <title>Differential expression of three double LIM proteins during the skeletal muscle terminal differentiation.</title>
        <authorList>
            <person name="Hashimoto N."/>
            <person name="Ogashiwa M."/>
        </authorList>
    </citation>
    <scope>NUCLEOTIDE SEQUENCE [MRNA]</scope>
    <source>
        <strain>C3H/HeJ</strain>
    </source>
</reference>
<reference key="2">
    <citation type="journal article" date="2005" name="Science">
        <title>The transcriptional landscape of the mammalian genome.</title>
        <authorList>
            <person name="Carninci P."/>
            <person name="Kasukawa T."/>
            <person name="Katayama S."/>
            <person name="Gough J."/>
            <person name="Frith M.C."/>
            <person name="Maeda N."/>
            <person name="Oyama R."/>
            <person name="Ravasi T."/>
            <person name="Lenhard B."/>
            <person name="Wells C."/>
            <person name="Kodzius R."/>
            <person name="Shimokawa K."/>
            <person name="Bajic V.B."/>
            <person name="Brenner S.E."/>
            <person name="Batalov S."/>
            <person name="Forrest A.R."/>
            <person name="Zavolan M."/>
            <person name="Davis M.J."/>
            <person name="Wilming L.G."/>
            <person name="Aidinis V."/>
            <person name="Allen J.E."/>
            <person name="Ambesi-Impiombato A."/>
            <person name="Apweiler R."/>
            <person name="Aturaliya R.N."/>
            <person name="Bailey T.L."/>
            <person name="Bansal M."/>
            <person name="Baxter L."/>
            <person name="Beisel K.W."/>
            <person name="Bersano T."/>
            <person name="Bono H."/>
            <person name="Chalk A.M."/>
            <person name="Chiu K.P."/>
            <person name="Choudhary V."/>
            <person name="Christoffels A."/>
            <person name="Clutterbuck D.R."/>
            <person name="Crowe M.L."/>
            <person name="Dalla E."/>
            <person name="Dalrymple B.P."/>
            <person name="de Bono B."/>
            <person name="Della Gatta G."/>
            <person name="di Bernardo D."/>
            <person name="Down T."/>
            <person name="Engstrom P."/>
            <person name="Fagiolini M."/>
            <person name="Faulkner G."/>
            <person name="Fletcher C.F."/>
            <person name="Fukushima T."/>
            <person name="Furuno M."/>
            <person name="Futaki S."/>
            <person name="Gariboldi M."/>
            <person name="Georgii-Hemming P."/>
            <person name="Gingeras T.R."/>
            <person name="Gojobori T."/>
            <person name="Green R.E."/>
            <person name="Gustincich S."/>
            <person name="Harbers M."/>
            <person name="Hayashi Y."/>
            <person name="Hensch T.K."/>
            <person name="Hirokawa N."/>
            <person name="Hill D."/>
            <person name="Huminiecki L."/>
            <person name="Iacono M."/>
            <person name="Ikeo K."/>
            <person name="Iwama A."/>
            <person name="Ishikawa T."/>
            <person name="Jakt M."/>
            <person name="Kanapin A."/>
            <person name="Katoh M."/>
            <person name="Kawasawa Y."/>
            <person name="Kelso J."/>
            <person name="Kitamura H."/>
            <person name="Kitano H."/>
            <person name="Kollias G."/>
            <person name="Krishnan S.P."/>
            <person name="Kruger A."/>
            <person name="Kummerfeld S.K."/>
            <person name="Kurochkin I.V."/>
            <person name="Lareau L.F."/>
            <person name="Lazarevic D."/>
            <person name="Lipovich L."/>
            <person name="Liu J."/>
            <person name="Liuni S."/>
            <person name="McWilliam S."/>
            <person name="Madan Babu M."/>
            <person name="Madera M."/>
            <person name="Marchionni L."/>
            <person name="Matsuda H."/>
            <person name="Matsuzawa S."/>
            <person name="Miki H."/>
            <person name="Mignone F."/>
            <person name="Miyake S."/>
            <person name="Morris K."/>
            <person name="Mottagui-Tabar S."/>
            <person name="Mulder N."/>
            <person name="Nakano N."/>
            <person name="Nakauchi H."/>
            <person name="Ng P."/>
            <person name="Nilsson R."/>
            <person name="Nishiguchi S."/>
            <person name="Nishikawa S."/>
            <person name="Nori F."/>
            <person name="Ohara O."/>
            <person name="Okazaki Y."/>
            <person name="Orlando V."/>
            <person name="Pang K.C."/>
            <person name="Pavan W.J."/>
            <person name="Pavesi G."/>
            <person name="Pesole G."/>
            <person name="Petrovsky N."/>
            <person name="Piazza S."/>
            <person name="Reed J."/>
            <person name="Reid J.F."/>
            <person name="Ring B.Z."/>
            <person name="Ringwald M."/>
            <person name="Rost B."/>
            <person name="Ruan Y."/>
            <person name="Salzberg S.L."/>
            <person name="Sandelin A."/>
            <person name="Schneider C."/>
            <person name="Schoenbach C."/>
            <person name="Sekiguchi K."/>
            <person name="Semple C.A."/>
            <person name="Seno S."/>
            <person name="Sessa L."/>
            <person name="Sheng Y."/>
            <person name="Shibata Y."/>
            <person name="Shimada H."/>
            <person name="Shimada K."/>
            <person name="Silva D."/>
            <person name="Sinclair B."/>
            <person name="Sperling S."/>
            <person name="Stupka E."/>
            <person name="Sugiura K."/>
            <person name="Sultana R."/>
            <person name="Takenaka Y."/>
            <person name="Taki K."/>
            <person name="Tammoja K."/>
            <person name="Tan S.L."/>
            <person name="Tang S."/>
            <person name="Taylor M.S."/>
            <person name="Tegner J."/>
            <person name="Teichmann S.A."/>
            <person name="Ueda H.R."/>
            <person name="van Nimwegen E."/>
            <person name="Verardo R."/>
            <person name="Wei C.L."/>
            <person name="Yagi K."/>
            <person name="Yamanishi H."/>
            <person name="Zabarovsky E."/>
            <person name="Zhu S."/>
            <person name="Zimmer A."/>
            <person name="Hide W."/>
            <person name="Bult C."/>
            <person name="Grimmond S.M."/>
            <person name="Teasdale R.D."/>
            <person name="Liu E.T."/>
            <person name="Brusic V."/>
            <person name="Quackenbush J."/>
            <person name="Wahlestedt C."/>
            <person name="Mattick J.S."/>
            <person name="Hume D.A."/>
            <person name="Kai C."/>
            <person name="Sasaki D."/>
            <person name="Tomaru Y."/>
            <person name="Fukuda S."/>
            <person name="Kanamori-Katayama M."/>
            <person name="Suzuki M."/>
            <person name="Aoki J."/>
            <person name="Arakawa T."/>
            <person name="Iida J."/>
            <person name="Imamura K."/>
            <person name="Itoh M."/>
            <person name="Kato T."/>
            <person name="Kawaji H."/>
            <person name="Kawagashira N."/>
            <person name="Kawashima T."/>
            <person name="Kojima M."/>
            <person name="Kondo S."/>
            <person name="Konno H."/>
            <person name="Nakano K."/>
            <person name="Ninomiya N."/>
            <person name="Nishio T."/>
            <person name="Okada M."/>
            <person name="Plessy C."/>
            <person name="Shibata K."/>
            <person name="Shiraki T."/>
            <person name="Suzuki S."/>
            <person name="Tagami M."/>
            <person name="Waki K."/>
            <person name="Watahiki A."/>
            <person name="Okamura-Oho Y."/>
            <person name="Suzuki H."/>
            <person name="Kawai J."/>
            <person name="Hayashizaki Y."/>
        </authorList>
    </citation>
    <scope>NUCLEOTIDE SEQUENCE [LARGE SCALE MRNA]</scope>
    <source>
        <strain>C57BL/6J</strain>
        <tissue>Embryo</tissue>
        <tissue>Embryonic stem cell</tissue>
    </source>
</reference>
<reference key="3">
    <citation type="journal article" date="2004" name="Genome Res.">
        <title>The status, quality, and expansion of the NIH full-length cDNA project: the Mammalian Gene Collection (MGC).</title>
        <authorList>
            <consortium name="The MGC Project Team"/>
        </authorList>
    </citation>
    <scope>NUCLEOTIDE SEQUENCE [LARGE SCALE MRNA]</scope>
    <source>
        <tissue>Liver</tissue>
    </source>
</reference>
<reference key="4">
    <citation type="journal article" date="2008" name="Circ. Res.">
        <title>PICOT attenuates cardiac hypertrophy by disrupting calcineurin-NFAT signaling.</title>
        <authorList>
            <person name="Jeong D."/>
            <person name="Kim J.M."/>
            <person name="Cha H."/>
            <person name="Oh J.G."/>
            <person name="Park J."/>
            <person name="Yun S.H."/>
            <person name="Ju E.S."/>
            <person name="Jeon E.S."/>
            <person name="Hajjar R.J."/>
            <person name="Park W.J."/>
        </authorList>
    </citation>
    <scope>INTERACTION WITH GLRX3</scope>
</reference>
<reference key="5">
    <citation type="journal article" date="2010" name="Cell">
        <title>A tissue-specific atlas of mouse protein phosphorylation and expression.</title>
        <authorList>
            <person name="Huttlin E.L."/>
            <person name="Jedrychowski M.P."/>
            <person name="Elias J.E."/>
            <person name="Goswami T."/>
            <person name="Rad R."/>
            <person name="Beausoleil S.A."/>
            <person name="Villen J."/>
            <person name="Haas W."/>
            <person name="Sowa M.E."/>
            <person name="Gygi S.P."/>
        </authorList>
    </citation>
    <scope>IDENTIFICATION BY MASS SPECTROMETRY [LARGE SCALE ANALYSIS]</scope>
    <source>
        <tissue>Kidney</tissue>
        <tissue>Liver</tissue>
        <tissue>Lung</tissue>
        <tissue>Pancreas</tissue>
        <tissue>Spleen</tissue>
    </source>
</reference>
<reference key="6">
    <citation type="journal article" date="2013" name="Mol. Cell">
        <title>SIRT5-mediated lysine desuccinylation impacts diverse metabolic pathways.</title>
        <authorList>
            <person name="Park J."/>
            <person name="Chen Y."/>
            <person name="Tishkoff D.X."/>
            <person name="Peng C."/>
            <person name="Tan M."/>
            <person name="Dai L."/>
            <person name="Xie Z."/>
            <person name="Zhang Y."/>
            <person name="Zwaans B.M."/>
            <person name="Skinner M.E."/>
            <person name="Lombard D.B."/>
            <person name="Zhao Y."/>
        </authorList>
    </citation>
    <scope>ACETYLATION [LARGE SCALE ANALYSIS] AT LYS-112</scope>
    <scope>SUCCINYLATION [LARGE SCALE ANALYSIS] AT LYS-137</scope>
    <scope>IDENTIFICATION BY MASS SPECTROMETRY [LARGE SCALE ANALYSIS]</scope>
    <source>
        <tissue>Embryonic fibroblast</tissue>
    </source>
</reference>
<evidence type="ECO:0000250" key="1"/>
<evidence type="ECO:0000250" key="2">
    <source>
        <dbReference type="UniProtKB" id="P21291"/>
    </source>
</evidence>
<evidence type="ECO:0000250" key="3">
    <source>
        <dbReference type="UniProtKB" id="P97315"/>
    </source>
</evidence>
<evidence type="ECO:0000250" key="4">
    <source>
        <dbReference type="UniProtKB" id="Q16527"/>
    </source>
</evidence>
<evidence type="ECO:0000255" key="5"/>
<evidence type="ECO:0000255" key="6">
    <source>
        <dbReference type="PROSITE-ProRule" id="PRU00125"/>
    </source>
</evidence>
<evidence type="ECO:0000269" key="7">
    <source>
    </source>
</evidence>
<evidence type="ECO:0000305" key="8"/>
<evidence type="ECO:0007744" key="9">
    <source>
    </source>
</evidence>
<comment type="function">
    <text evidence="1">Drastically down-regulated in response to PDGF-BB or cell injury, that promote smooth muscle cell proliferation and dedifferentiation. Seems to play a role in the development of the embryonic vascular system (By similarity).</text>
</comment>
<comment type="subunit">
    <text evidence="1 7">Interacts with KAT14. The LIM domain 1 is necessary and sufficient for this interaction (By similarity). Interacts with GLRX3.</text>
</comment>
<comment type="subcellular location">
    <subcellularLocation>
        <location evidence="1">Nucleus</location>
    </subcellularLocation>
</comment>
<proteinExistence type="evidence at protein level"/>
<gene>
    <name type="primary">Csrp2</name>
    <name type="synonym">Dlp1</name>
</gene>
<accession>P97314</accession>
<accession>Q9CZG5</accession>
<feature type="chain" id="PRO_0000075722" description="Cysteine and glycine-rich protein 2">
    <location>
        <begin position="1"/>
        <end position="193"/>
    </location>
</feature>
<feature type="domain" description="LIM zinc-binding 1" evidence="6">
    <location>
        <begin position="10"/>
        <end position="61"/>
    </location>
</feature>
<feature type="domain" description="LIM zinc-binding 2" evidence="6">
    <location>
        <begin position="119"/>
        <end position="170"/>
    </location>
</feature>
<feature type="short sequence motif" description="Nuclear localization signal" evidence="5">
    <location>
        <begin position="64"/>
        <end position="69"/>
    </location>
</feature>
<feature type="modified residue" description="N6-acetyllysine" evidence="9">
    <location>
        <position position="112"/>
    </location>
</feature>
<feature type="modified residue" description="N6-acetyllysine" evidence="2">
    <location>
        <position position="131"/>
    </location>
</feature>
<feature type="modified residue" description="N6-acetyllysine; alternate" evidence="3">
    <location>
        <position position="137"/>
    </location>
</feature>
<feature type="modified residue" description="N6-succinyllysine; alternate" evidence="9">
    <location>
        <position position="137"/>
    </location>
</feature>
<feature type="modified residue" description="N6-acetyllysine" evidence="3">
    <location>
        <position position="161"/>
    </location>
</feature>
<feature type="cross-link" description="Glycyl lysine isopeptide (Lys-Gly) (interchain with G-Cter in SUMO2)" evidence="4">
    <location>
        <position position="91"/>
    </location>
</feature>
<feature type="sequence conflict" description="In Ref. 1; BAB28379." evidence="8" ref="1">
    <original>F</original>
    <variation>Y</variation>
    <location>
        <position position="30"/>
    </location>
</feature>
<sequence length="193" mass="20926">MPVWGGGNKCGACGRTVYHAEEVQCDGRSFHRCCFLCMVCRKNLDSTTVAIHDEEIYCKSCYGKKYGPKGYGYGQGAGTLNMDRGERLGIKPESAQPHRPTTNPNTSKFAQKYGGAEKCSRCGDSVYAAEKIIGAGKPWHKNCFRCAKCGKSLESTTLTEKEGEIYCKGCYAKNFGPKGFGYGQGAGALVHAQ</sequence>
<organism>
    <name type="scientific">Mus musculus</name>
    <name type="common">Mouse</name>
    <dbReference type="NCBI Taxonomy" id="10090"/>
    <lineage>
        <taxon>Eukaryota</taxon>
        <taxon>Metazoa</taxon>
        <taxon>Chordata</taxon>
        <taxon>Craniata</taxon>
        <taxon>Vertebrata</taxon>
        <taxon>Euteleostomi</taxon>
        <taxon>Mammalia</taxon>
        <taxon>Eutheria</taxon>
        <taxon>Euarchontoglires</taxon>
        <taxon>Glires</taxon>
        <taxon>Rodentia</taxon>
        <taxon>Myomorpha</taxon>
        <taxon>Muroidea</taxon>
        <taxon>Muridae</taxon>
        <taxon>Murinae</taxon>
        <taxon>Mus</taxon>
        <taxon>Mus</taxon>
    </lineage>
</organism>
<protein>
    <recommendedName>
        <fullName>Cysteine and glycine-rich protein 2</fullName>
    </recommendedName>
    <alternativeName>
        <fullName>Cysteine-rich protein 2</fullName>
        <shortName>CRP2</shortName>
    </alternativeName>
    <alternativeName>
        <fullName>Double LIM protein 1</fullName>
        <shortName>DLP-1</shortName>
    </alternativeName>
</protein>